<organism>
    <name type="scientific">Candida glabrata (strain ATCC 2001 / BCRC 20586 / JCM 3761 / NBRC 0622 / NRRL Y-65 / CBS 138)</name>
    <name type="common">Yeast</name>
    <name type="synonym">Nakaseomyces glabratus</name>
    <dbReference type="NCBI Taxonomy" id="284593"/>
    <lineage>
        <taxon>Eukaryota</taxon>
        <taxon>Fungi</taxon>
        <taxon>Dikarya</taxon>
        <taxon>Ascomycota</taxon>
        <taxon>Saccharomycotina</taxon>
        <taxon>Saccharomycetes</taxon>
        <taxon>Saccharomycetales</taxon>
        <taxon>Saccharomycetaceae</taxon>
        <taxon>Nakaseomyces</taxon>
    </lineage>
</organism>
<dbReference type="EMBL" id="CR380947">
    <property type="protein sequence ID" value="CAG57864.1"/>
    <property type="molecule type" value="Genomic_DNA"/>
</dbReference>
<dbReference type="RefSeq" id="XP_444971.1">
    <property type="nucleotide sequence ID" value="XM_444971.1"/>
</dbReference>
<dbReference type="SMR" id="Q6FXR8"/>
<dbReference type="FunCoup" id="Q6FXR8">
    <property type="interactions" value="619"/>
</dbReference>
<dbReference type="STRING" id="284593.Q6FXR8"/>
<dbReference type="EnsemblFungi" id="CAGL0A04675g-T">
    <property type="protein sequence ID" value="CAGL0A04675g-T-p1"/>
    <property type="gene ID" value="CAGL0A04675g"/>
</dbReference>
<dbReference type="KEGG" id="cgr:2886410"/>
<dbReference type="CGD" id="CAL0126897">
    <property type="gene designation" value="CAGL0A04675g"/>
</dbReference>
<dbReference type="VEuPathDB" id="FungiDB:B1J91_A04675g"/>
<dbReference type="VEuPathDB" id="FungiDB:CAGL0A04675g"/>
<dbReference type="eggNOG" id="KOG1654">
    <property type="taxonomic scope" value="Eukaryota"/>
</dbReference>
<dbReference type="HOGENOM" id="CLU_119276_0_1_1"/>
<dbReference type="InParanoid" id="Q6FXR8"/>
<dbReference type="OMA" id="AVYQEHK"/>
<dbReference type="Proteomes" id="UP000002428">
    <property type="component" value="Chromosome A"/>
</dbReference>
<dbReference type="GO" id="GO:0000421">
    <property type="term" value="C:autophagosome membrane"/>
    <property type="evidence" value="ECO:0007669"/>
    <property type="project" value="UniProtKB-SubCell"/>
</dbReference>
<dbReference type="GO" id="GO:0031410">
    <property type="term" value="C:cytoplasmic vesicle"/>
    <property type="evidence" value="ECO:0007669"/>
    <property type="project" value="UniProtKB-KW"/>
</dbReference>
<dbReference type="GO" id="GO:0005829">
    <property type="term" value="C:cytosol"/>
    <property type="evidence" value="ECO:0007669"/>
    <property type="project" value="EnsemblFungi"/>
</dbReference>
<dbReference type="GO" id="GO:0000329">
    <property type="term" value="C:fungal-type vacuole membrane"/>
    <property type="evidence" value="ECO:0007669"/>
    <property type="project" value="EnsemblFungi"/>
</dbReference>
<dbReference type="GO" id="GO:0005811">
    <property type="term" value="C:lipid droplet"/>
    <property type="evidence" value="ECO:0007669"/>
    <property type="project" value="EnsemblFungi"/>
</dbReference>
<dbReference type="GO" id="GO:0031966">
    <property type="term" value="C:mitochondrial membrane"/>
    <property type="evidence" value="ECO:0007669"/>
    <property type="project" value="EnsemblFungi"/>
</dbReference>
<dbReference type="GO" id="GO:0000407">
    <property type="term" value="C:phagophore assembly site"/>
    <property type="evidence" value="ECO:0007669"/>
    <property type="project" value="EnsemblFungi"/>
</dbReference>
<dbReference type="GO" id="GO:0120095">
    <property type="term" value="C:vacuole-isolation membrane contact site"/>
    <property type="evidence" value="ECO:0007669"/>
    <property type="project" value="EnsemblFungi"/>
</dbReference>
<dbReference type="GO" id="GO:0008429">
    <property type="term" value="F:phosphatidylethanolamine binding"/>
    <property type="evidence" value="ECO:0007669"/>
    <property type="project" value="EnsemblFungi"/>
</dbReference>
<dbReference type="GO" id="GO:0031386">
    <property type="term" value="F:protein tag activity"/>
    <property type="evidence" value="ECO:0007669"/>
    <property type="project" value="EnsemblFungi"/>
</dbReference>
<dbReference type="GO" id="GO:0000422">
    <property type="term" value="P:autophagy of mitochondrion"/>
    <property type="evidence" value="ECO:0007669"/>
    <property type="project" value="EnsemblFungi"/>
</dbReference>
<dbReference type="GO" id="GO:0032258">
    <property type="term" value="P:cytoplasm to vacuole targeting by the Cvt pathway"/>
    <property type="evidence" value="ECO:0007669"/>
    <property type="project" value="EnsemblFungi"/>
</dbReference>
<dbReference type="GO" id="GO:0006888">
    <property type="term" value="P:endoplasmic reticulum to Golgi vesicle-mediated transport"/>
    <property type="evidence" value="ECO:0007669"/>
    <property type="project" value="EnsemblFungi"/>
</dbReference>
<dbReference type="GO" id="GO:0140042">
    <property type="term" value="P:lipid droplet formation"/>
    <property type="evidence" value="ECO:0007669"/>
    <property type="project" value="EnsemblFungi"/>
</dbReference>
<dbReference type="GO" id="GO:0061025">
    <property type="term" value="P:membrane fusion"/>
    <property type="evidence" value="ECO:0007669"/>
    <property type="project" value="EnsemblFungi"/>
</dbReference>
<dbReference type="GO" id="GO:0034727">
    <property type="term" value="P:piecemeal microautophagy of the nucleus"/>
    <property type="evidence" value="ECO:0007669"/>
    <property type="project" value="EnsemblFungi"/>
</dbReference>
<dbReference type="GO" id="GO:0034497">
    <property type="term" value="P:protein localization to phagophore assembly site"/>
    <property type="evidence" value="ECO:0007669"/>
    <property type="project" value="EnsemblFungi"/>
</dbReference>
<dbReference type="GO" id="GO:0071211">
    <property type="term" value="P:protein targeting to vacuole involved in autophagy"/>
    <property type="evidence" value="ECO:0007669"/>
    <property type="project" value="EnsemblFungi"/>
</dbReference>
<dbReference type="GO" id="GO:0031503">
    <property type="term" value="P:protein-containing complex localization"/>
    <property type="evidence" value="ECO:0007669"/>
    <property type="project" value="EnsemblFungi"/>
</dbReference>
<dbReference type="GO" id="GO:0016241">
    <property type="term" value="P:regulation of macroautophagy"/>
    <property type="evidence" value="ECO:0007669"/>
    <property type="project" value="EnsemblFungi"/>
</dbReference>
<dbReference type="GO" id="GO:1905153">
    <property type="term" value="P:regulation of membrane invagination"/>
    <property type="evidence" value="ECO:0007669"/>
    <property type="project" value="EnsemblFungi"/>
</dbReference>
<dbReference type="GO" id="GO:0061709">
    <property type="term" value="P:reticulophagy"/>
    <property type="evidence" value="ECO:0007669"/>
    <property type="project" value="EnsemblFungi"/>
</dbReference>
<dbReference type="CDD" id="cd16128">
    <property type="entry name" value="Ubl_ATG8"/>
    <property type="match status" value="1"/>
</dbReference>
<dbReference type="FunFam" id="3.10.20.90:FF:000010">
    <property type="entry name" value="Autophagy-related protein"/>
    <property type="match status" value="1"/>
</dbReference>
<dbReference type="Gene3D" id="3.10.20.90">
    <property type="entry name" value="Phosphatidylinositol 3-kinase Catalytic Subunit, Chain A, domain 1"/>
    <property type="match status" value="1"/>
</dbReference>
<dbReference type="InterPro" id="IPR004241">
    <property type="entry name" value="Atg8-like"/>
</dbReference>
<dbReference type="InterPro" id="IPR029071">
    <property type="entry name" value="Ubiquitin-like_domsf"/>
</dbReference>
<dbReference type="PANTHER" id="PTHR10969">
    <property type="entry name" value="MICROTUBULE-ASSOCIATED PROTEINS 1A/1B LIGHT CHAIN 3-RELATED"/>
    <property type="match status" value="1"/>
</dbReference>
<dbReference type="Pfam" id="PF02991">
    <property type="entry name" value="ATG8"/>
    <property type="match status" value="1"/>
</dbReference>
<dbReference type="SUPFAM" id="SSF54236">
    <property type="entry name" value="Ubiquitin-like"/>
    <property type="match status" value="1"/>
</dbReference>
<gene>
    <name type="primary">ATG8</name>
    <name type="synonym">AUT7</name>
    <name type="ordered locus">CAGL0A04675g</name>
</gene>
<comment type="function">
    <text evidence="1">Ubiquitin-like modifier involved in autophagosome formation. With ATG4, mediates the delivery of the autophagosomes to the vacuole via the microtubule cytoskeleton. Required for selective autophagic degradation of the nucleus (nucleophagy) as well as for mitophagy which contributes to regulate mitochondrial quantity and quality by eliminating the mitochondria to a basal level to fulfill cellular energy requirements and preventing excess ROS production. Participates also in membrane fusion events that take place in the early secretory pathway. Also involved in endoplasmic reticulum-specific autophagic process and is essential for the survival of cells subjected to severe ER stress. The ATG8-PE conjugate mediates tethering between adjacent membranes and stimulates membrane hemifusion, leading to expansion of the autophagosomal membrane during autophagy.</text>
</comment>
<comment type="subcellular location">
    <subcellularLocation>
        <location evidence="1">Cytoplasmic vesicle</location>
        <location evidence="1">Autophagosome membrane</location>
        <topology evidence="1">Lipid-anchor</topology>
    </subcellularLocation>
    <subcellularLocation>
        <location evidence="1">Vacuole membrane</location>
        <topology evidence="1">Lipid-anchor</topology>
    </subcellularLocation>
</comment>
<comment type="PTM">
    <text evidence="1">The C-terminal 2 residues are removed to expose Gly-116 at the C-terminus. The C-terminal Gly is then amidated with phosphatidylethanolamine by an activating system similar to that for ubiquitin.</text>
</comment>
<comment type="similarity">
    <text evidence="2">Belongs to the ATG8 family.</text>
</comment>
<accession>Q6FXR8</accession>
<sequence>MKSSFKSEYPFEKRKAESERISEKFQNRIPVICEKAEKSDIPEVDKRKYLVPADLTVGQFVYVIRKRIMLPPEKAIFIFVNDTLPPTASLMSQVYQEHKDKDGFLYVTYSGENTFGYQ</sequence>
<evidence type="ECO:0000250" key="1">
    <source>
        <dbReference type="UniProtKB" id="P38182"/>
    </source>
</evidence>
<evidence type="ECO:0000305" key="2"/>
<protein>
    <recommendedName>
        <fullName>Autophagy-related protein 8</fullName>
    </recommendedName>
    <alternativeName>
        <fullName>Autophagy-related ubiquitin-like modifier ATG8</fullName>
    </alternativeName>
</protein>
<feature type="chain" id="PRO_0000017212" description="Autophagy-related protein 8">
    <location>
        <begin position="1"/>
        <end position="116"/>
    </location>
</feature>
<feature type="propeptide" id="PRO_0000017213" description="Removed in mature form" evidence="1">
    <location>
        <begin position="117"/>
        <end position="118"/>
    </location>
</feature>
<feature type="site" description="Cleavage; by ATG4" evidence="1">
    <location>
        <begin position="116"/>
        <end position="117"/>
    </location>
</feature>
<feature type="lipid moiety-binding region" description="Phosphatidylethanolamine amidated glycine" evidence="1">
    <location>
        <position position="116"/>
    </location>
</feature>
<proteinExistence type="inferred from homology"/>
<reference key="1">
    <citation type="journal article" date="2004" name="Nature">
        <title>Genome evolution in yeasts.</title>
        <authorList>
            <person name="Dujon B."/>
            <person name="Sherman D."/>
            <person name="Fischer G."/>
            <person name="Durrens P."/>
            <person name="Casaregola S."/>
            <person name="Lafontaine I."/>
            <person name="de Montigny J."/>
            <person name="Marck C."/>
            <person name="Neuveglise C."/>
            <person name="Talla E."/>
            <person name="Goffard N."/>
            <person name="Frangeul L."/>
            <person name="Aigle M."/>
            <person name="Anthouard V."/>
            <person name="Babour A."/>
            <person name="Barbe V."/>
            <person name="Barnay S."/>
            <person name="Blanchin S."/>
            <person name="Beckerich J.-M."/>
            <person name="Beyne E."/>
            <person name="Bleykasten C."/>
            <person name="Boisrame A."/>
            <person name="Boyer J."/>
            <person name="Cattolico L."/>
            <person name="Confanioleri F."/>
            <person name="de Daruvar A."/>
            <person name="Despons L."/>
            <person name="Fabre E."/>
            <person name="Fairhead C."/>
            <person name="Ferry-Dumazet H."/>
            <person name="Groppi A."/>
            <person name="Hantraye F."/>
            <person name="Hennequin C."/>
            <person name="Jauniaux N."/>
            <person name="Joyet P."/>
            <person name="Kachouri R."/>
            <person name="Kerrest A."/>
            <person name="Koszul R."/>
            <person name="Lemaire M."/>
            <person name="Lesur I."/>
            <person name="Ma L."/>
            <person name="Muller H."/>
            <person name="Nicaud J.-M."/>
            <person name="Nikolski M."/>
            <person name="Oztas S."/>
            <person name="Ozier-Kalogeropoulos O."/>
            <person name="Pellenz S."/>
            <person name="Potier S."/>
            <person name="Richard G.-F."/>
            <person name="Straub M.-L."/>
            <person name="Suleau A."/>
            <person name="Swennen D."/>
            <person name="Tekaia F."/>
            <person name="Wesolowski-Louvel M."/>
            <person name="Westhof E."/>
            <person name="Wirth B."/>
            <person name="Zeniou-Meyer M."/>
            <person name="Zivanovic Y."/>
            <person name="Bolotin-Fukuhara M."/>
            <person name="Thierry A."/>
            <person name="Bouchier C."/>
            <person name="Caudron B."/>
            <person name="Scarpelli C."/>
            <person name="Gaillardin C."/>
            <person name="Weissenbach J."/>
            <person name="Wincker P."/>
            <person name="Souciet J.-L."/>
        </authorList>
    </citation>
    <scope>NUCLEOTIDE SEQUENCE [LARGE SCALE GENOMIC DNA]</scope>
    <source>
        <strain>ATCC 2001 / BCRC 20586 / JCM 3761 / NBRC 0622 / NRRL Y-65 / CBS 138</strain>
    </source>
</reference>
<name>ATG8_CANGA</name>
<keyword id="KW-0072">Autophagy</keyword>
<keyword id="KW-0968">Cytoplasmic vesicle</keyword>
<keyword id="KW-0449">Lipoprotein</keyword>
<keyword id="KW-0472">Membrane</keyword>
<keyword id="KW-0653">Protein transport</keyword>
<keyword id="KW-1185">Reference proteome</keyword>
<keyword id="KW-0813">Transport</keyword>
<keyword id="KW-0833">Ubl conjugation pathway</keyword>
<keyword id="KW-0926">Vacuole</keyword>